<reference key="1">
    <citation type="journal article" date="1996" name="DNA Res.">
        <title>A 718-kb DNA sequence of the Escherichia coli K-12 genome corresponding to the 12.7-28.0 min region on the linkage map.</title>
        <authorList>
            <person name="Oshima T."/>
            <person name="Aiba H."/>
            <person name="Baba T."/>
            <person name="Fujita K."/>
            <person name="Hayashi K."/>
            <person name="Honjo A."/>
            <person name="Ikemoto K."/>
            <person name="Inada T."/>
            <person name="Itoh T."/>
            <person name="Kajihara M."/>
            <person name="Kanai K."/>
            <person name="Kashimoto K."/>
            <person name="Kimura S."/>
            <person name="Kitagawa M."/>
            <person name="Makino K."/>
            <person name="Masuda S."/>
            <person name="Miki T."/>
            <person name="Mizobuchi K."/>
            <person name="Mori H."/>
            <person name="Motomura K."/>
            <person name="Nakamura Y."/>
            <person name="Nashimoto H."/>
            <person name="Nishio Y."/>
            <person name="Saito N."/>
            <person name="Sampei G."/>
            <person name="Seki Y."/>
            <person name="Tagami H."/>
            <person name="Takemoto K."/>
            <person name="Wada C."/>
            <person name="Yamamoto Y."/>
            <person name="Yano M."/>
            <person name="Horiuchi T."/>
        </authorList>
    </citation>
    <scope>NUCLEOTIDE SEQUENCE [LARGE SCALE GENOMIC DNA]</scope>
    <source>
        <strain>K12 / W3110 / ATCC 27325 / DSM 5911</strain>
    </source>
</reference>
<reference key="2">
    <citation type="journal article" date="1997" name="Science">
        <title>The complete genome sequence of Escherichia coli K-12.</title>
        <authorList>
            <person name="Blattner F.R."/>
            <person name="Plunkett G. III"/>
            <person name="Bloch C.A."/>
            <person name="Perna N.T."/>
            <person name="Burland V."/>
            <person name="Riley M."/>
            <person name="Collado-Vides J."/>
            <person name="Glasner J.D."/>
            <person name="Rode C.K."/>
            <person name="Mayhew G.F."/>
            <person name="Gregor J."/>
            <person name="Davis N.W."/>
            <person name="Kirkpatrick H.A."/>
            <person name="Goeden M.A."/>
            <person name="Rose D.J."/>
            <person name="Mau B."/>
            <person name="Shao Y."/>
        </authorList>
    </citation>
    <scope>NUCLEOTIDE SEQUENCE [LARGE SCALE GENOMIC DNA]</scope>
    <source>
        <strain>K12 / MG1655 / ATCC 47076</strain>
    </source>
</reference>
<reference key="3">
    <citation type="journal article" date="2006" name="Mol. Syst. Biol.">
        <title>Highly accurate genome sequences of Escherichia coli K-12 strains MG1655 and W3110.</title>
        <authorList>
            <person name="Hayashi K."/>
            <person name="Morooka N."/>
            <person name="Yamamoto Y."/>
            <person name="Fujita K."/>
            <person name="Isono K."/>
            <person name="Choi S."/>
            <person name="Ohtsubo E."/>
            <person name="Baba T."/>
            <person name="Wanner B.L."/>
            <person name="Mori H."/>
            <person name="Horiuchi T."/>
        </authorList>
    </citation>
    <scope>NUCLEOTIDE SEQUENCE [LARGE SCALE GENOMIC DNA]</scope>
    <source>
        <strain>K12 / W3110 / ATCC 27325 / DSM 5911</strain>
    </source>
</reference>
<reference key="4">
    <citation type="journal article" date="2005" name="Science">
        <title>Global topology analysis of the Escherichia coli inner membrane proteome.</title>
        <authorList>
            <person name="Daley D.O."/>
            <person name="Rapp M."/>
            <person name="Granseth E."/>
            <person name="Melen K."/>
            <person name="Drew D."/>
            <person name="von Heijne G."/>
        </authorList>
    </citation>
    <scope>TOPOLOGY [LARGE SCALE ANALYSIS]</scope>
    <scope>SUBCELLULAR LOCATION</scope>
    <source>
        <strain>K12 / MG1655 / ATCC 47076</strain>
    </source>
</reference>
<reference key="5">
    <citation type="journal article" date="2016" name="Microbiology">
        <title>Transcription factor CecR (YbiH) regulates a set of genes affecting the sensitivity of Escherichia coli against cefoperazone and chloramphenicol.</title>
        <authorList>
            <person name="Yamanaka Y."/>
            <person name="Shimada T."/>
            <person name="Yamamoto K."/>
            <person name="Ishihama A."/>
        </authorList>
    </citation>
    <scope>FUNCTION</scope>
    <scope>INDUCTION</scope>
    <source>
        <strain>K12 / W3110 / ATCC 27325 / DSM 5911</strain>
    </source>
</reference>
<gene>
    <name type="primary">ybhS</name>
    <name type="ordered locus">b0793</name>
    <name type="ordered locus">JW0777</name>
</gene>
<organism>
    <name type="scientific">Escherichia coli (strain K12)</name>
    <dbReference type="NCBI Taxonomy" id="83333"/>
    <lineage>
        <taxon>Bacteria</taxon>
        <taxon>Pseudomonadati</taxon>
        <taxon>Pseudomonadota</taxon>
        <taxon>Gammaproteobacteria</taxon>
        <taxon>Enterobacterales</taxon>
        <taxon>Enterobacteriaceae</taxon>
        <taxon>Escherichia</taxon>
    </lineage>
</organism>
<sequence>MSNPILSWRRVRALCVKETRQIVRDPSSWLIAVVIPLLLLFIFGYGINLDSSKLRVGILLEQRSEAALDFTHTMTGSPYIDATISDNRQELIAKMQAGKIRGLVVIPVDFAEQMERANATAPIQVITDGSEPNTANFVQGYVEGIWQIWQMQRAEDNGQTFEPLIDVQTRYWFNPAAISQHFIIPGAVTIIMTVIGAILTSLVVAREWERGTMEALLSTEITRTELLLCKLIPYYFLGMLAMLLCMLVSVFILGVPYRGSLLILFFISSLFLLSTLGMGLLISTITRNQFNAAQVALNAAFLPSIMLSGFIFQIDSMPAVIRAVTYIIPARYFVSTLQSLFLAGNIPVVLVVNVLFLIASAVMFIGLTWLKTKRRLD</sequence>
<evidence type="ECO:0000255" key="1"/>
<evidence type="ECO:0000255" key="2">
    <source>
        <dbReference type="PROSITE-ProRule" id="PRU00442"/>
    </source>
</evidence>
<evidence type="ECO:0000269" key="3">
    <source>
    </source>
</evidence>
<evidence type="ECO:0000269" key="4">
    <source>
    </source>
</evidence>
<evidence type="ECO:0000305" key="5"/>
<evidence type="ECO:0000305" key="6">
    <source>
    </source>
</evidence>
<dbReference type="EMBL" id="U00096">
    <property type="protein sequence ID" value="AAC73880.1"/>
    <property type="molecule type" value="Genomic_DNA"/>
</dbReference>
<dbReference type="EMBL" id="AP009048">
    <property type="protein sequence ID" value="BAA35453.1"/>
    <property type="molecule type" value="Genomic_DNA"/>
</dbReference>
<dbReference type="PIR" id="A64816">
    <property type="entry name" value="A64816"/>
</dbReference>
<dbReference type="RefSeq" id="NP_415314.1">
    <property type="nucleotide sequence ID" value="NC_000913.3"/>
</dbReference>
<dbReference type="RefSeq" id="WP_000070131.1">
    <property type="nucleotide sequence ID" value="NZ_STEB01000019.1"/>
</dbReference>
<dbReference type="SMR" id="P0AFQ2"/>
<dbReference type="BioGRID" id="4261835">
    <property type="interactions" value="17"/>
</dbReference>
<dbReference type="ComplexPortal" id="CPX-4443">
    <property type="entry name" value="Sodium/lithium ABC transporter complex"/>
</dbReference>
<dbReference type="FunCoup" id="P0AFQ2">
    <property type="interactions" value="534"/>
</dbReference>
<dbReference type="IntAct" id="P0AFQ2">
    <property type="interactions" value="5"/>
</dbReference>
<dbReference type="STRING" id="511145.b0793"/>
<dbReference type="PaxDb" id="511145-b0793"/>
<dbReference type="DNASU" id="945411"/>
<dbReference type="EnsemblBacteria" id="AAC73880">
    <property type="protein sequence ID" value="AAC73880"/>
    <property type="gene ID" value="b0793"/>
</dbReference>
<dbReference type="GeneID" id="945411"/>
<dbReference type="KEGG" id="ecj:JW0777"/>
<dbReference type="KEGG" id="eco:b0793"/>
<dbReference type="KEGG" id="ecoc:C3026_05015"/>
<dbReference type="PATRIC" id="fig|1411691.4.peg.1485"/>
<dbReference type="EchoBASE" id="EB3439"/>
<dbReference type="eggNOG" id="COG0842">
    <property type="taxonomic scope" value="Bacteria"/>
</dbReference>
<dbReference type="HOGENOM" id="CLU_039483_8_3_6"/>
<dbReference type="InParanoid" id="P0AFQ2"/>
<dbReference type="OMA" id="CAMMTSI"/>
<dbReference type="OrthoDB" id="9808686at2"/>
<dbReference type="PhylomeDB" id="P0AFQ2"/>
<dbReference type="BioCyc" id="EcoCyc:YBHS-MONOMER"/>
<dbReference type="BioCyc" id="MetaCyc:YBHS-MONOMER"/>
<dbReference type="PRO" id="PR:P0AFQ2"/>
<dbReference type="Proteomes" id="UP000000625">
    <property type="component" value="Chromosome"/>
</dbReference>
<dbReference type="GO" id="GO:0055052">
    <property type="term" value="C:ATP-binding cassette (ABC) transporter complex, substrate-binding subunit-containing"/>
    <property type="evidence" value="ECO:0000303"/>
    <property type="project" value="ComplexPortal"/>
</dbReference>
<dbReference type="GO" id="GO:0005886">
    <property type="term" value="C:plasma membrane"/>
    <property type="evidence" value="ECO:0000255"/>
    <property type="project" value="EcoCyc"/>
</dbReference>
<dbReference type="GO" id="GO:0140359">
    <property type="term" value="F:ABC-type transporter activity"/>
    <property type="evidence" value="ECO:0007669"/>
    <property type="project" value="InterPro"/>
</dbReference>
<dbReference type="GO" id="GO:0015562">
    <property type="term" value="F:efflux transmembrane transporter activity"/>
    <property type="evidence" value="ECO:0000316"/>
    <property type="project" value="EcoCyc"/>
</dbReference>
<dbReference type="GO" id="GO:0090452">
    <property type="term" value="P:lithium ion transmembrane transport"/>
    <property type="evidence" value="ECO:0000303"/>
    <property type="project" value="ComplexPortal"/>
</dbReference>
<dbReference type="GO" id="GO:0035725">
    <property type="term" value="P:sodium ion transmembrane transport"/>
    <property type="evidence" value="ECO:0000303"/>
    <property type="project" value="ComplexPortal"/>
</dbReference>
<dbReference type="GO" id="GO:0015904">
    <property type="term" value="P:tetracycline transmembrane transport"/>
    <property type="evidence" value="ECO:0000303"/>
    <property type="project" value="ComplexPortal"/>
</dbReference>
<dbReference type="GO" id="GO:1990961">
    <property type="term" value="P:xenobiotic detoxification by transmembrane export across the plasma membrane"/>
    <property type="evidence" value="ECO:0000316"/>
    <property type="project" value="EcoCyc"/>
</dbReference>
<dbReference type="GO" id="GO:0006855">
    <property type="term" value="P:xenobiotic transmembrane transport"/>
    <property type="evidence" value="ECO:0000303"/>
    <property type="project" value="ComplexPortal"/>
</dbReference>
<dbReference type="FunFam" id="3.40.1710.10:FF:000001">
    <property type="entry name" value="Inner membrane transport permease ybhS"/>
    <property type="match status" value="1"/>
</dbReference>
<dbReference type="Gene3D" id="3.40.1710.10">
    <property type="entry name" value="abc type-2 transporter like domain"/>
    <property type="match status" value="1"/>
</dbReference>
<dbReference type="InterPro" id="IPR051449">
    <property type="entry name" value="ABC-2_transporter_component"/>
</dbReference>
<dbReference type="InterPro" id="IPR013525">
    <property type="entry name" value="ABC2_TM"/>
</dbReference>
<dbReference type="InterPro" id="IPR047817">
    <property type="entry name" value="ABC2_TM_bact-type"/>
</dbReference>
<dbReference type="PANTHER" id="PTHR30294">
    <property type="entry name" value="MEMBRANE COMPONENT OF ABC TRANSPORTER YHHJ-RELATED"/>
    <property type="match status" value="1"/>
</dbReference>
<dbReference type="PANTHER" id="PTHR30294:SF29">
    <property type="entry name" value="MULTIDRUG ABC TRANSPORTER PERMEASE YBHS-RELATED"/>
    <property type="match status" value="1"/>
</dbReference>
<dbReference type="Pfam" id="PF12698">
    <property type="entry name" value="ABC2_membrane_3"/>
    <property type="match status" value="1"/>
</dbReference>
<dbReference type="PROSITE" id="PS51012">
    <property type="entry name" value="ABC_TM2"/>
    <property type="match status" value="1"/>
</dbReference>
<name>YBHS_ECOLI</name>
<feature type="chain" id="PRO_0000183005" description="Probable multidrug ABC transporter permease YbhS">
    <location>
        <begin position="1"/>
        <end position="377"/>
    </location>
</feature>
<feature type="topological domain" description="Cytoplasmic" evidence="5">
    <location>
        <begin position="1"/>
        <end position="28"/>
    </location>
</feature>
<feature type="transmembrane region" description="Helical" evidence="1">
    <location>
        <begin position="29"/>
        <end position="49"/>
    </location>
</feature>
<feature type="topological domain" description="Periplasmic" evidence="5">
    <location>
        <begin position="50"/>
        <end position="181"/>
    </location>
</feature>
<feature type="transmembrane region" description="Helical" evidence="1">
    <location>
        <begin position="182"/>
        <end position="202"/>
    </location>
</feature>
<feature type="topological domain" description="Cytoplasmic" evidence="5">
    <location>
        <begin position="203"/>
        <end position="234"/>
    </location>
</feature>
<feature type="transmembrane region" description="Helical" evidence="1">
    <location>
        <begin position="235"/>
        <end position="255"/>
    </location>
</feature>
<feature type="topological domain" description="Periplasmic" evidence="5">
    <location>
        <begin position="256"/>
        <end position="261"/>
    </location>
</feature>
<feature type="transmembrane region" description="Helical" evidence="1">
    <location>
        <begin position="262"/>
        <end position="282"/>
    </location>
</feature>
<feature type="topological domain" description="Cytoplasmic" evidence="5">
    <location>
        <begin position="283"/>
        <end position="291"/>
    </location>
</feature>
<feature type="transmembrane region" description="Helical" evidence="1">
    <location>
        <begin position="292"/>
        <end position="312"/>
    </location>
</feature>
<feature type="topological domain" description="Periplasmic" evidence="5">
    <location>
        <begin position="313"/>
        <end position="345"/>
    </location>
</feature>
<feature type="transmembrane region" description="Helical" evidence="1">
    <location>
        <begin position="346"/>
        <end position="366"/>
    </location>
</feature>
<feature type="topological domain" description="Cytoplasmic" evidence="3">
    <location>
        <begin position="367"/>
        <end position="377"/>
    </location>
</feature>
<feature type="domain" description="ABC transmembrane type-2" evidence="2">
    <location>
        <begin position="145"/>
        <end position="375"/>
    </location>
</feature>
<accession>P0AFQ2</accession>
<accession>P75775</accession>
<protein>
    <recommendedName>
        <fullName evidence="5">Probable multidrug ABC transporter permease YbhS</fullName>
    </recommendedName>
</protein>
<comment type="function">
    <text evidence="6">Part of the ABC transporter complex YbhFSR that could be involved in efflux of cefoperazone. Probably involved in the translocation of the substrate across the membrane.</text>
</comment>
<comment type="subunit">
    <text evidence="5">The complex is probably composed of two ATP-binding proteins (YbhF) and two transmembrane proteins (YbhR and YbhS).</text>
</comment>
<comment type="subcellular location">
    <subcellularLocation>
        <location evidence="3">Cell inner membrane</location>
        <topology evidence="1">Multi-pass membrane protein</topology>
    </subcellularLocation>
</comment>
<comment type="induction">
    <text evidence="4">Repressed by the transcriptional regulator CecR.</text>
</comment>
<comment type="similarity">
    <text evidence="5">Belongs to the ABC-2 integral membrane protein family.</text>
</comment>
<keyword id="KW-0997">Cell inner membrane</keyword>
<keyword id="KW-1003">Cell membrane</keyword>
<keyword id="KW-0472">Membrane</keyword>
<keyword id="KW-1185">Reference proteome</keyword>
<keyword id="KW-0812">Transmembrane</keyword>
<keyword id="KW-1133">Transmembrane helix</keyword>
<keyword id="KW-0813">Transport</keyword>
<proteinExistence type="evidence at protein level"/>